<comment type="function">
    <text evidence="1">Acts as an E3 ubiquitin-protein ligase specific for ldb1, mediating ubiquitination and proteasome-dependent degradation of excess ldb1 in a RING-dependent manner. Does not degrade ldb1 bound to lhx1/lim1, nor lim1 itself and thus contributes to the establishment of proper ldb1-lhx1/lim1 stoichiometry and the formation of a ldb1-lhx1/lim1 complex. Interferes with Spemann organizer function and suppresses secondary axis formation induced by ldb1 and lhx1/lim1.</text>
</comment>
<comment type="catalytic activity">
    <reaction>
        <text>S-ubiquitinyl-[E2 ubiquitin-conjugating enzyme]-L-cysteine + [acceptor protein]-L-lysine = [E2 ubiquitin-conjugating enzyme]-L-cysteine + N(6)-ubiquitinyl-[acceptor protein]-L-lysine.</text>
        <dbReference type="EC" id="2.3.2.27"/>
    </reaction>
</comment>
<comment type="pathway">
    <text>Protein modification; protein ubiquitination.</text>
</comment>
<comment type="subunit">
    <text evidence="2">Forms homodimers through the C-terminal region. The N-terminus interacts with the homeobox of LIM/homeobox factor lhx1/lim1, with lhx3/lim3 and lhx5/lim5, and with the N-terminus of ldb1 (By similarity).</text>
</comment>
<comment type="subcellular location">
    <subcellularLocation>
        <location evidence="1">Nucleus</location>
    </subcellularLocation>
</comment>
<comment type="similarity">
    <text evidence="6">Belongs to the RNF12 family.</text>
</comment>
<name>RNF12_XENTR</name>
<protein>
    <recommendedName>
        <fullName>E3 ubiquitin-protein ligase RNF12</fullName>
        <ecNumber>2.3.2.27</ecNumber>
    </recommendedName>
    <alternativeName>
        <fullName>RING finger protein 12</fullName>
    </alternativeName>
    <alternativeName>
        <fullName evidence="6">RING-type E3 ubiquitin transferase RNF12</fullName>
    </alternativeName>
</protein>
<feature type="chain" id="PRO_0000314058" description="E3 ubiquitin-protein ligase RNF12">
    <location>
        <begin position="1"/>
        <end position="639"/>
    </location>
</feature>
<feature type="zinc finger region" description="RING-type; atypical" evidence="4">
    <location>
        <begin position="585"/>
        <end position="626"/>
    </location>
</feature>
<feature type="region of interest" description="Disordered" evidence="5">
    <location>
        <begin position="1"/>
        <end position="28"/>
    </location>
</feature>
<feature type="region of interest" description="Disordered" evidence="5">
    <location>
        <begin position="67"/>
        <end position="403"/>
    </location>
</feature>
<feature type="region of interest" description="Disordered" evidence="5">
    <location>
        <begin position="467"/>
        <end position="534"/>
    </location>
</feature>
<feature type="short sequence motif" description="PDZ-binding" evidence="3">
    <location>
        <begin position="636"/>
        <end position="639"/>
    </location>
</feature>
<feature type="compositionally biased region" description="Low complexity" evidence="5">
    <location>
        <begin position="11"/>
        <end position="21"/>
    </location>
</feature>
<feature type="compositionally biased region" description="Polar residues" evidence="5">
    <location>
        <begin position="110"/>
        <end position="138"/>
    </location>
</feature>
<feature type="compositionally biased region" description="Polar residues" evidence="5">
    <location>
        <begin position="147"/>
        <end position="166"/>
    </location>
</feature>
<feature type="compositionally biased region" description="Basic and acidic residues" evidence="5">
    <location>
        <begin position="213"/>
        <end position="228"/>
    </location>
</feature>
<feature type="compositionally biased region" description="Polar residues" evidence="5">
    <location>
        <begin position="244"/>
        <end position="253"/>
    </location>
</feature>
<feature type="compositionally biased region" description="Low complexity" evidence="5">
    <location>
        <begin position="269"/>
        <end position="286"/>
    </location>
</feature>
<feature type="compositionally biased region" description="Polar residues" evidence="5">
    <location>
        <begin position="290"/>
        <end position="302"/>
    </location>
</feature>
<feature type="compositionally biased region" description="Low complexity" evidence="5">
    <location>
        <begin position="303"/>
        <end position="327"/>
    </location>
</feature>
<feature type="compositionally biased region" description="Low complexity" evidence="5">
    <location>
        <begin position="335"/>
        <end position="348"/>
    </location>
</feature>
<feature type="compositionally biased region" description="Polar residues" evidence="5">
    <location>
        <begin position="349"/>
        <end position="358"/>
    </location>
</feature>
<feature type="compositionally biased region" description="Basic and acidic residues" evidence="5">
    <location>
        <begin position="372"/>
        <end position="382"/>
    </location>
</feature>
<feature type="compositionally biased region" description="Polar residues" evidence="5">
    <location>
        <begin position="383"/>
        <end position="399"/>
    </location>
</feature>
<feature type="compositionally biased region" description="Pro residues" evidence="5">
    <location>
        <begin position="473"/>
        <end position="482"/>
    </location>
</feature>
<feature type="compositionally biased region" description="Pro residues" evidence="5">
    <location>
        <begin position="493"/>
        <end position="506"/>
    </location>
</feature>
<evidence type="ECO:0000250" key="1"/>
<evidence type="ECO:0000250" key="2">
    <source>
        <dbReference type="UniProtKB" id="Q641J8"/>
    </source>
</evidence>
<evidence type="ECO:0000255" key="3"/>
<evidence type="ECO:0000255" key="4">
    <source>
        <dbReference type="PROSITE-ProRule" id="PRU00175"/>
    </source>
</evidence>
<evidence type="ECO:0000256" key="5">
    <source>
        <dbReference type="SAM" id="MobiDB-lite"/>
    </source>
</evidence>
<evidence type="ECO:0000305" key="6"/>
<evidence type="ECO:0000312" key="7">
    <source>
        <dbReference type="EMBL" id="CAL49424.1"/>
    </source>
</evidence>
<sequence>MESADSAGKGSTEQSESQRQSQMDRLDREEAFYQFVNNLNEDDYRLMRDNNLLGTPGEITKEELLRRLQQIKEGPPQPSTEGTRGDPVSASGDPAEDSSNGDSIIDWLNSVRQTGNTTRSGQRGNQSWRAVSRTNPNSGDFRFSLEINVNRTSGNPSMPSLEQSSEMPGAEDMEVSSQGENENEPEPVAPRVAQAEVTEEAPVQRGQRRARSRSPDQRRTRARTDRSRSPLHQAVEPPIRRAQHSSSQTVDASSTEEAEGSSRTRHHVSSQMQNSSSSNETEGSSRTRQHITARQQALGTEGQSQSQTQTQSQSQTQTQSQTQSQSTVHLSNPESRSSSQPPQTDSSSNAETTGTGQRPPTIVLDLQVRRVRPGDYRQRDSIANRTRSRSQTPNNTVTYESERGGFRRTFSRSERAGVRTYVSTIRIPIRRILNTGLSETTSVAIQTMLRQIMTGFGELSYFMYNDNDTDPNNPTPVSPPAAVPGEAQNLVSPEPPAPIVEPPEPVAPVESEEGSNVSTSSARREGRNSRGGVTFEESGSLPFLSLAQFFLLNEDDDDQPRGLTKEQIDNLSTRNFGENDALKTCSVCITEYTEGNKLRKLPCSHEYHVHCIDRWLSENSTCPICRRAVLVAGNRESIV</sequence>
<gene>
    <name evidence="7" type="primary">rnf12</name>
    <name type="ORF">TGas054b08.1</name>
</gene>
<organism>
    <name type="scientific">Xenopus tropicalis</name>
    <name type="common">Western clawed frog</name>
    <name type="synonym">Silurana tropicalis</name>
    <dbReference type="NCBI Taxonomy" id="8364"/>
    <lineage>
        <taxon>Eukaryota</taxon>
        <taxon>Metazoa</taxon>
        <taxon>Chordata</taxon>
        <taxon>Craniata</taxon>
        <taxon>Vertebrata</taxon>
        <taxon>Euteleostomi</taxon>
        <taxon>Amphibia</taxon>
        <taxon>Batrachia</taxon>
        <taxon>Anura</taxon>
        <taxon>Pipoidea</taxon>
        <taxon>Pipidae</taxon>
        <taxon>Xenopodinae</taxon>
        <taxon>Xenopus</taxon>
        <taxon>Silurana</taxon>
    </lineage>
</organism>
<accession>Q07G42</accession>
<keyword id="KW-0217">Developmental protein</keyword>
<keyword id="KW-0479">Metal-binding</keyword>
<keyword id="KW-0539">Nucleus</keyword>
<keyword id="KW-1185">Reference proteome</keyword>
<keyword id="KW-0808">Transferase</keyword>
<keyword id="KW-0833">Ubl conjugation pathway</keyword>
<keyword id="KW-0862">Zinc</keyword>
<keyword id="KW-0863">Zinc-finger</keyword>
<dbReference type="EC" id="2.3.2.27"/>
<dbReference type="EMBL" id="CR762181">
    <property type="protein sequence ID" value="CAL49424.1"/>
    <property type="molecule type" value="mRNA"/>
</dbReference>
<dbReference type="RefSeq" id="NP_001016091.1">
    <property type="nucleotide sequence ID" value="NM_001016091.2"/>
</dbReference>
<dbReference type="SMR" id="Q07G42"/>
<dbReference type="FunCoup" id="Q07G42">
    <property type="interactions" value="2492"/>
</dbReference>
<dbReference type="STRING" id="8364.ENSXETP00000043838"/>
<dbReference type="PaxDb" id="8364-ENSXETP00000009955"/>
<dbReference type="GeneID" id="548845"/>
<dbReference type="KEGG" id="xtr:548845"/>
<dbReference type="AGR" id="Xenbase:XB-GENE-492020"/>
<dbReference type="CTD" id="51132"/>
<dbReference type="Xenbase" id="XB-GENE-492020">
    <property type="gene designation" value="rlim"/>
</dbReference>
<dbReference type="eggNOG" id="KOG0800">
    <property type="taxonomic scope" value="Eukaryota"/>
</dbReference>
<dbReference type="InParanoid" id="Q07G42"/>
<dbReference type="OMA" id="YEGGHEG"/>
<dbReference type="OrthoDB" id="8062037at2759"/>
<dbReference type="Reactome" id="R-XTR-983168">
    <property type="pathway name" value="Antigen processing: Ubiquitination &amp; Proteasome degradation"/>
</dbReference>
<dbReference type="UniPathway" id="UPA00143"/>
<dbReference type="Proteomes" id="UP000008143">
    <property type="component" value="Chromosome 8"/>
</dbReference>
<dbReference type="GO" id="GO:0005634">
    <property type="term" value="C:nucleus"/>
    <property type="evidence" value="ECO:0000250"/>
    <property type="project" value="UniProtKB"/>
</dbReference>
<dbReference type="GO" id="GO:0140297">
    <property type="term" value="F:DNA-binding transcription factor binding"/>
    <property type="evidence" value="ECO:0000250"/>
    <property type="project" value="UniProtKB"/>
</dbReference>
<dbReference type="GO" id="GO:0042802">
    <property type="term" value="F:identical protein binding"/>
    <property type="evidence" value="ECO:0000250"/>
    <property type="project" value="UniProtKB"/>
</dbReference>
<dbReference type="GO" id="GO:0004842">
    <property type="term" value="F:ubiquitin-protein transferase activity"/>
    <property type="evidence" value="ECO:0000250"/>
    <property type="project" value="UniProtKB"/>
</dbReference>
<dbReference type="GO" id="GO:0008270">
    <property type="term" value="F:zinc ion binding"/>
    <property type="evidence" value="ECO:0007669"/>
    <property type="project" value="UniProtKB-KW"/>
</dbReference>
<dbReference type="GO" id="GO:0000578">
    <property type="term" value="P:embryonic axis specification"/>
    <property type="evidence" value="ECO:0000250"/>
    <property type="project" value="UniProtKB"/>
</dbReference>
<dbReference type="GO" id="GO:0016567">
    <property type="term" value="P:protein ubiquitination"/>
    <property type="evidence" value="ECO:0000250"/>
    <property type="project" value="UniProtKB"/>
</dbReference>
<dbReference type="GO" id="GO:0006511">
    <property type="term" value="P:ubiquitin-dependent protein catabolic process"/>
    <property type="evidence" value="ECO:0000250"/>
    <property type="project" value="UniProtKB"/>
</dbReference>
<dbReference type="CDD" id="cd16674">
    <property type="entry name" value="RING-H2_RNF12"/>
    <property type="match status" value="1"/>
</dbReference>
<dbReference type="FunFam" id="3.30.40.10:FF:000054">
    <property type="entry name" value="E3 ubiquitin-protein ligase RLIM isoform X1"/>
    <property type="match status" value="1"/>
</dbReference>
<dbReference type="Gene3D" id="3.30.40.10">
    <property type="entry name" value="Zinc/RING finger domain, C3HC4 (zinc finger)"/>
    <property type="match status" value="1"/>
</dbReference>
<dbReference type="InterPro" id="IPR051834">
    <property type="entry name" value="RING_finger_E3_ligase"/>
</dbReference>
<dbReference type="InterPro" id="IPR001841">
    <property type="entry name" value="Znf_RING"/>
</dbReference>
<dbReference type="InterPro" id="IPR013083">
    <property type="entry name" value="Znf_RING/FYVE/PHD"/>
</dbReference>
<dbReference type="PANTHER" id="PTHR45931:SF4">
    <property type="entry name" value="E3 UBIQUITIN-PROTEIN LIGASE RLIM"/>
    <property type="match status" value="1"/>
</dbReference>
<dbReference type="PANTHER" id="PTHR45931">
    <property type="entry name" value="SI:CH211-59O9.10"/>
    <property type="match status" value="1"/>
</dbReference>
<dbReference type="Pfam" id="PF13639">
    <property type="entry name" value="zf-RING_2"/>
    <property type="match status" value="1"/>
</dbReference>
<dbReference type="SMART" id="SM00184">
    <property type="entry name" value="RING"/>
    <property type="match status" value="1"/>
</dbReference>
<dbReference type="SUPFAM" id="SSF57850">
    <property type="entry name" value="RING/U-box"/>
    <property type="match status" value="1"/>
</dbReference>
<dbReference type="PROSITE" id="PS50089">
    <property type="entry name" value="ZF_RING_2"/>
    <property type="match status" value="1"/>
</dbReference>
<proteinExistence type="evidence at transcript level"/>
<reference evidence="7" key="1">
    <citation type="submission" date="2006-10" db="EMBL/GenBank/DDBJ databases">
        <authorList>
            <consortium name="Sanger Xenopus tropicalis EST/cDNA project"/>
        </authorList>
    </citation>
    <scope>NUCLEOTIDE SEQUENCE [LARGE SCALE MRNA]</scope>
    <source>
        <tissue evidence="7">Gastrula</tissue>
    </source>
</reference>